<proteinExistence type="inferred from homology"/>
<keyword id="KW-0378">Hydrolase</keyword>
<keyword id="KW-0645">Protease</keyword>
<keyword id="KW-1185">Reference proteome</keyword>
<keyword id="KW-0964">Secreted</keyword>
<keyword id="KW-0720">Serine protease</keyword>
<keyword id="KW-0732">Signal</keyword>
<keyword id="KW-0843">Virulence</keyword>
<keyword id="KW-0865">Zymogen</keyword>
<comment type="function">
    <text evidence="1">Exhibits a significant hydrolytic activity for the carbonyl side of glutamic acid. Shows activity toward human fibronectin and type 1 collagen (By similarity).</text>
</comment>
<comment type="catalytic activity">
    <reaction evidence="3">
        <text>Preferential cleavage: Glu-|-Xaa, Asp-|-Xaa.</text>
        <dbReference type="EC" id="3.4.21.19"/>
    </reaction>
</comment>
<comment type="subcellular location">
    <subcellularLocation>
        <location evidence="1">Secreted</location>
    </subcellularLocation>
</comment>
<comment type="similarity">
    <text evidence="4">Belongs to the peptidase S1B family.</text>
</comment>
<name>GSEA_STAEQ</name>
<evidence type="ECO:0000250" key="1"/>
<evidence type="ECO:0000255" key="2"/>
<evidence type="ECO:0000255" key="3">
    <source>
        <dbReference type="PROSITE-ProRule" id="PRU10083"/>
    </source>
</evidence>
<evidence type="ECO:0000305" key="4"/>
<gene>
    <name type="primary">gseA</name>
    <name type="ordered locus">SERP1397</name>
</gene>
<protein>
    <recommendedName>
        <fullName>Glutamyl endopeptidase</fullName>
        <ecNumber>3.4.21.19</ecNumber>
    </recommendedName>
    <alternativeName>
        <fullName>Glutamic acid-specific protease</fullName>
        <shortName>GluSE</shortName>
    </alternativeName>
</protein>
<feature type="signal peptide" evidence="2">
    <location>
        <begin position="1"/>
        <end position="27"/>
    </location>
</feature>
<feature type="propeptide" id="PRO_0000026898" evidence="1">
    <location>
        <begin position="28"/>
        <end position="66"/>
    </location>
</feature>
<feature type="chain" id="PRO_0000026899" description="Glutamyl endopeptidase">
    <location>
        <begin position="67"/>
        <end position="282"/>
    </location>
</feature>
<feature type="active site" description="Charge relay system" evidence="3">
    <location>
        <position position="117"/>
    </location>
</feature>
<feature type="active site" description="Charge relay system" evidence="3">
    <location>
        <position position="159"/>
    </location>
</feature>
<feature type="active site" description="Charge relay system" evidence="3">
    <location>
        <position position="235"/>
    </location>
</feature>
<reference key="1">
    <citation type="journal article" date="2005" name="J. Bacteriol.">
        <title>Insights on evolution of virulence and resistance from the complete genome analysis of an early methicillin-resistant Staphylococcus aureus strain and a biofilm-producing methicillin-resistant Staphylococcus epidermidis strain.</title>
        <authorList>
            <person name="Gill S.R."/>
            <person name="Fouts D.E."/>
            <person name="Archer G.L."/>
            <person name="Mongodin E.F."/>
            <person name="DeBoy R.T."/>
            <person name="Ravel J."/>
            <person name="Paulsen I.T."/>
            <person name="Kolonay J.F."/>
            <person name="Brinkac L.M."/>
            <person name="Beanan M.J."/>
            <person name="Dodson R.J."/>
            <person name="Daugherty S.C."/>
            <person name="Madupu R."/>
            <person name="Angiuoli S.V."/>
            <person name="Durkin A.S."/>
            <person name="Haft D.H."/>
            <person name="Vamathevan J.J."/>
            <person name="Khouri H."/>
            <person name="Utterback T.R."/>
            <person name="Lee C."/>
            <person name="Dimitrov G."/>
            <person name="Jiang L."/>
            <person name="Qin H."/>
            <person name="Weidman J."/>
            <person name="Tran K."/>
            <person name="Kang K.H."/>
            <person name="Hance I.R."/>
            <person name="Nelson K.E."/>
            <person name="Fraser C.M."/>
        </authorList>
    </citation>
    <scope>NUCLEOTIDE SEQUENCE [LARGE SCALE GENOMIC DNA]</scope>
    <source>
        <strain>ATCC 35984 / DSM 28319 / BCRC 17069 / CCUG 31568 / BM 3577 / RP62A</strain>
    </source>
</reference>
<dbReference type="EC" id="3.4.21.19"/>
<dbReference type="EMBL" id="CP000029">
    <property type="protein sequence ID" value="AAW54738.1"/>
    <property type="molecule type" value="Genomic_DNA"/>
</dbReference>
<dbReference type="RefSeq" id="WP_010959202.1">
    <property type="nucleotide sequence ID" value="NC_002976.3"/>
</dbReference>
<dbReference type="SMR" id="Q5HN75"/>
<dbReference type="STRING" id="176279.SERP1397"/>
<dbReference type="MEROPS" id="S01.522"/>
<dbReference type="KEGG" id="ser:SERP1397"/>
<dbReference type="eggNOG" id="COG3591">
    <property type="taxonomic scope" value="Bacteria"/>
</dbReference>
<dbReference type="HOGENOM" id="CLU_073589_1_0_9"/>
<dbReference type="Proteomes" id="UP000000531">
    <property type="component" value="Chromosome"/>
</dbReference>
<dbReference type="GO" id="GO:0005576">
    <property type="term" value="C:extracellular region"/>
    <property type="evidence" value="ECO:0007669"/>
    <property type="project" value="UniProtKB-SubCell"/>
</dbReference>
<dbReference type="GO" id="GO:0004252">
    <property type="term" value="F:serine-type endopeptidase activity"/>
    <property type="evidence" value="ECO:0007669"/>
    <property type="project" value="InterPro"/>
</dbReference>
<dbReference type="GO" id="GO:0006508">
    <property type="term" value="P:proteolysis"/>
    <property type="evidence" value="ECO:0007669"/>
    <property type="project" value="UniProtKB-KW"/>
</dbReference>
<dbReference type="Gene3D" id="2.40.10.10">
    <property type="entry name" value="Trypsin-like serine proteases"/>
    <property type="match status" value="2"/>
</dbReference>
<dbReference type="InterPro" id="IPR050966">
    <property type="entry name" value="Glutamyl_endopeptidase"/>
</dbReference>
<dbReference type="InterPro" id="IPR009003">
    <property type="entry name" value="Peptidase_S1_PA"/>
</dbReference>
<dbReference type="InterPro" id="IPR043504">
    <property type="entry name" value="Peptidase_S1_PA_chymotrypsin"/>
</dbReference>
<dbReference type="InterPro" id="IPR008256">
    <property type="entry name" value="Peptidase_S1B"/>
</dbReference>
<dbReference type="InterPro" id="IPR008353">
    <property type="entry name" value="Peptidase_S1B_tx"/>
</dbReference>
<dbReference type="InterPro" id="IPR000126">
    <property type="entry name" value="V8_ser_AS"/>
</dbReference>
<dbReference type="PANTHER" id="PTHR15462">
    <property type="entry name" value="SERINE PROTEASE"/>
    <property type="match status" value="1"/>
</dbReference>
<dbReference type="PANTHER" id="PTHR15462:SF8">
    <property type="entry name" value="SERINE PROTEASE"/>
    <property type="match status" value="1"/>
</dbReference>
<dbReference type="Pfam" id="PF13365">
    <property type="entry name" value="Trypsin_2"/>
    <property type="match status" value="1"/>
</dbReference>
<dbReference type="PRINTS" id="PR01774">
    <property type="entry name" value="EXFOLTOXIN"/>
</dbReference>
<dbReference type="PRINTS" id="PR00839">
    <property type="entry name" value="V8PROTEASE"/>
</dbReference>
<dbReference type="SUPFAM" id="SSF50494">
    <property type="entry name" value="Trypsin-like serine proteases"/>
    <property type="match status" value="1"/>
</dbReference>
<dbReference type="PROSITE" id="PS00673">
    <property type="entry name" value="V8_SER"/>
    <property type="match status" value="1"/>
</dbReference>
<accession>Q5HN75</accession>
<sequence>MKKRFLSICTMTIAALATTTMVNTSYAKTDTESHNHSSLGTENKNVLDINSSSHNIKPSQNKSYPSVILPNNNRHQIFNTTQGHYDAVSFIYIPIHGGYMSGSGVVVGENEILTNKHVVNGAKGNPRNISVHPSAKNENDYPNGKFVGQEIIPYPGNSDLAILRVSPNEHNQHIGQVVKPATISSNTDTRINENITVTGYPGDKPLATMWESVGKVVYIGGEELRYDLSTVGGNSGSPVFNGKNQVIGIHYGGVDNKYNSSVYINDFVQQFLRNNIPDINIQ</sequence>
<organism>
    <name type="scientific">Staphylococcus epidermidis (strain ATCC 35984 / DSM 28319 / BCRC 17069 / CCUG 31568 / BM 3577 / RP62A)</name>
    <dbReference type="NCBI Taxonomy" id="176279"/>
    <lineage>
        <taxon>Bacteria</taxon>
        <taxon>Bacillati</taxon>
        <taxon>Bacillota</taxon>
        <taxon>Bacilli</taxon>
        <taxon>Bacillales</taxon>
        <taxon>Staphylococcaceae</taxon>
        <taxon>Staphylococcus</taxon>
    </lineage>
</organism>